<dbReference type="EMBL" id="AL583922">
    <property type="protein sequence ID" value="CAC30589.1"/>
    <property type="molecule type" value="Genomic_DNA"/>
</dbReference>
<dbReference type="EMBL" id="AL023635">
    <property type="protein sequence ID" value="CAA19218.1"/>
    <property type="status" value="ALT_INIT"/>
    <property type="molecule type" value="Genomic_DNA"/>
</dbReference>
<dbReference type="PIR" id="H87113">
    <property type="entry name" value="H87113"/>
</dbReference>
<dbReference type="PIR" id="T44720">
    <property type="entry name" value="T44720"/>
</dbReference>
<dbReference type="RefSeq" id="NP_302128.1">
    <property type="nucleotide sequence ID" value="NC_002677.1"/>
</dbReference>
<dbReference type="RefSeq" id="WP_010908449.1">
    <property type="nucleotide sequence ID" value="NC_002677.1"/>
</dbReference>
<dbReference type="SMR" id="Q9CBS9"/>
<dbReference type="STRING" id="272631.gene:17575480"/>
<dbReference type="KEGG" id="mle:ML1638"/>
<dbReference type="PATRIC" id="fig|272631.5.peg.3092"/>
<dbReference type="Leproma" id="ML1638"/>
<dbReference type="eggNOG" id="COG1579">
    <property type="taxonomic scope" value="Bacteria"/>
</dbReference>
<dbReference type="HOGENOM" id="CLU_073076_0_0_11"/>
<dbReference type="OrthoDB" id="9784388at2"/>
<dbReference type="Proteomes" id="UP000000806">
    <property type="component" value="Chromosome"/>
</dbReference>
<dbReference type="Gene3D" id="1.10.287.1490">
    <property type="match status" value="1"/>
</dbReference>
<dbReference type="InterPro" id="IPR056003">
    <property type="entry name" value="CT398_CC_hairpin"/>
</dbReference>
<dbReference type="Pfam" id="PF24481">
    <property type="entry name" value="CT398_CC"/>
    <property type="match status" value="1"/>
</dbReference>
<comment type="sequence caution" evidence="2">
    <conflict type="erroneous initiation">
        <sequence resource="EMBL-CDS" id="CAA19218"/>
    </conflict>
</comment>
<proteinExistence type="predicted"/>
<name>Y1638_MYCLE</name>
<protein>
    <recommendedName>
        <fullName>Uncharacterized protein ML1638</fullName>
    </recommendedName>
</protein>
<evidence type="ECO:0000255" key="1"/>
<evidence type="ECO:0000305" key="2"/>
<gene>
    <name type="ordered locus">ML1638</name>
    <name type="ORF">MLCB1243.37</name>
</gene>
<accession>Q9CBS9</accession>
<accession>O69482</accession>
<organism>
    <name type="scientific">Mycobacterium leprae (strain TN)</name>
    <dbReference type="NCBI Taxonomy" id="272631"/>
    <lineage>
        <taxon>Bacteria</taxon>
        <taxon>Bacillati</taxon>
        <taxon>Actinomycetota</taxon>
        <taxon>Actinomycetes</taxon>
        <taxon>Mycobacteriales</taxon>
        <taxon>Mycobacteriaceae</taxon>
        <taxon>Mycobacterium</taxon>
    </lineage>
</organism>
<keyword id="KW-0175">Coiled coil</keyword>
<keyword id="KW-1185">Reference proteome</keyword>
<reference key="1">
    <citation type="journal article" date="2001" name="Nature">
        <title>Massive gene decay in the leprosy bacillus.</title>
        <authorList>
            <person name="Cole S.T."/>
            <person name="Eiglmeier K."/>
            <person name="Parkhill J."/>
            <person name="James K.D."/>
            <person name="Thomson N.R."/>
            <person name="Wheeler P.R."/>
            <person name="Honore N."/>
            <person name="Garnier T."/>
            <person name="Churcher C.M."/>
            <person name="Harris D.E."/>
            <person name="Mungall K.L."/>
            <person name="Basham D."/>
            <person name="Brown D."/>
            <person name="Chillingworth T."/>
            <person name="Connor R."/>
            <person name="Davies R.M."/>
            <person name="Devlin K."/>
            <person name="Duthoy S."/>
            <person name="Feltwell T."/>
            <person name="Fraser A."/>
            <person name="Hamlin N."/>
            <person name="Holroyd S."/>
            <person name="Hornsby T."/>
            <person name="Jagels K."/>
            <person name="Lacroix C."/>
            <person name="Maclean J."/>
            <person name="Moule S."/>
            <person name="Murphy L.D."/>
            <person name="Oliver K."/>
            <person name="Quail M.A."/>
            <person name="Rajandream M.A."/>
            <person name="Rutherford K.M."/>
            <person name="Rutter S."/>
            <person name="Seeger K."/>
            <person name="Simon S."/>
            <person name="Simmonds M."/>
            <person name="Skelton J."/>
            <person name="Squares R."/>
            <person name="Squares S."/>
            <person name="Stevens K."/>
            <person name="Taylor K."/>
            <person name="Whitehead S."/>
            <person name="Woodward J.R."/>
            <person name="Barrell B.G."/>
        </authorList>
    </citation>
    <scope>NUCLEOTIDE SEQUENCE [LARGE SCALE GENOMIC DNA]</scope>
    <source>
        <strain>TN</strain>
    </source>
</reference>
<sequence>MSKLDDELSRIAHRANYLPQREAYERMRVERTGANDRLVAVQIALEDVDTQVFLLESEIDAMRQREDRDRLLLNSGATDAKQLSDLQPEFGTWQRRKNSLEDSLREVMKRRGELQDQLTAELGAIERMQTDLVGARQTLDVAFAEIDQVGQPHSSQCDVLIAELAPALSAPYERLCAGGGLGVGQLQGHRCGACRSEIGRGELSCISVDVDDEVVKYPESGAIQLLDKGFFQ</sequence>
<feature type="chain" id="PRO_0000103984" description="Uncharacterized protein ML1638">
    <location>
        <begin position="1"/>
        <end position="232"/>
    </location>
</feature>
<feature type="coiled-coil region" evidence="1">
    <location>
        <begin position="89"/>
        <end position="140"/>
    </location>
</feature>